<accession>A1WBR0</accession>
<evidence type="ECO:0000255" key="1">
    <source>
        <dbReference type="HAMAP-Rule" id="MF_00758"/>
    </source>
</evidence>
<comment type="similarity">
    <text evidence="1">Belongs to the UPF0301 (AlgH) family.</text>
</comment>
<name>Y3573_ACISJ</name>
<dbReference type="EMBL" id="CP000539">
    <property type="protein sequence ID" value="ABM43685.1"/>
    <property type="molecule type" value="Genomic_DNA"/>
</dbReference>
<dbReference type="SMR" id="A1WBR0"/>
<dbReference type="STRING" id="232721.Ajs_3573"/>
<dbReference type="KEGG" id="ajs:Ajs_3573"/>
<dbReference type="eggNOG" id="COG1678">
    <property type="taxonomic scope" value="Bacteria"/>
</dbReference>
<dbReference type="HOGENOM" id="CLU_057596_1_0_4"/>
<dbReference type="Proteomes" id="UP000000645">
    <property type="component" value="Chromosome"/>
</dbReference>
<dbReference type="GO" id="GO:0005829">
    <property type="term" value="C:cytosol"/>
    <property type="evidence" value="ECO:0007669"/>
    <property type="project" value="TreeGrafter"/>
</dbReference>
<dbReference type="Gene3D" id="3.40.1740.10">
    <property type="entry name" value="VC0467-like"/>
    <property type="match status" value="1"/>
</dbReference>
<dbReference type="HAMAP" id="MF_00758">
    <property type="entry name" value="UPF0301"/>
    <property type="match status" value="1"/>
</dbReference>
<dbReference type="InterPro" id="IPR003774">
    <property type="entry name" value="AlgH-like"/>
</dbReference>
<dbReference type="NCBIfam" id="NF001266">
    <property type="entry name" value="PRK00228.1-1"/>
    <property type="match status" value="1"/>
</dbReference>
<dbReference type="PANTHER" id="PTHR30327">
    <property type="entry name" value="UNCHARACTERIZED PROTEIN YQGE"/>
    <property type="match status" value="1"/>
</dbReference>
<dbReference type="PANTHER" id="PTHR30327:SF1">
    <property type="entry name" value="UPF0301 PROTEIN YQGE"/>
    <property type="match status" value="1"/>
</dbReference>
<dbReference type="Pfam" id="PF02622">
    <property type="entry name" value="DUF179"/>
    <property type="match status" value="1"/>
</dbReference>
<dbReference type="SUPFAM" id="SSF143456">
    <property type="entry name" value="VC0467-like"/>
    <property type="match status" value="1"/>
</dbReference>
<feature type="chain" id="PRO_1000046637" description="UPF0301 protein Ajs_3573">
    <location>
        <begin position="1"/>
        <end position="199"/>
    </location>
</feature>
<organism>
    <name type="scientific">Acidovorax sp. (strain JS42)</name>
    <dbReference type="NCBI Taxonomy" id="232721"/>
    <lineage>
        <taxon>Bacteria</taxon>
        <taxon>Pseudomonadati</taxon>
        <taxon>Pseudomonadota</taxon>
        <taxon>Betaproteobacteria</taxon>
        <taxon>Burkholderiales</taxon>
        <taxon>Comamonadaceae</taxon>
        <taxon>Acidovorax</taxon>
    </lineage>
</organism>
<gene>
    <name type="ordered locus">Ajs_3573</name>
</gene>
<proteinExistence type="inferred from homology"/>
<sequence>MPADTAPMNLTHHFLIAMPGVEDASFSRSVVYLCEHSERGALGLIINKPTPISLEGLFEKVDLSLGREDLTLQPVFQGGPVQTERGFVLHEAMRGPQESEDESPYASTMTIPGGLEMTTSKDVLEALAHGAGPRRVLVTLGYSAWGEGQLESELAENSWLTVGADVSVIFETPVQERYDRALGLLGLQSWMLSPEAGHA</sequence>
<reference key="1">
    <citation type="submission" date="2006-12" db="EMBL/GenBank/DDBJ databases">
        <title>Complete sequence of chromosome 1 of Acidovorax sp. JS42.</title>
        <authorList>
            <person name="Copeland A."/>
            <person name="Lucas S."/>
            <person name="Lapidus A."/>
            <person name="Barry K."/>
            <person name="Detter J.C."/>
            <person name="Glavina del Rio T."/>
            <person name="Dalin E."/>
            <person name="Tice H."/>
            <person name="Pitluck S."/>
            <person name="Chertkov O."/>
            <person name="Brettin T."/>
            <person name="Bruce D."/>
            <person name="Han C."/>
            <person name="Tapia R."/>
            <person name="Gilna P."/>
            <person name="Schmutz J."/>
            <person name="Larimer F."/>
            <person name="Land M."/>
            <person name="Hauser L."/>
            <person name="Kyrpides N."/>
            <person name="Kim E."/>
            <person name="Stahl D."/>
            <person name="Richardson P."/>
        </authorList>
    </citation>
    <scope>NUCLEOTIDE SEQUENCE [LARGE SCALE GENOMIC DNA]</scope>
    <source>
        <strain>JS42</strain>
    </source>
</reference>
<protein>
    <recommendedName>
        <fullName evidence="1">UPF0301 protein Ajs_3573</fullName>
    </recommendedName>
</protein>